<evidence type="ECO:0000255" key="1">
    <source>
        <dbReference type="HAMAP-Rule" id="MF_01853"/>
    </source>
</evidence>
<sequence>MKIIQEIPEKNIIKVMPENLDDLWHLSHIVQAYNAVYSVTERRTEDKGDKLRADRGTKRRVFLGIKVEKVSFHEEVNRLRVSGKIIHAPEDIPIGSYHTLDIEPFTQISIQKNWKKWDLTRLKEAEESGKRPKVVVVILDDSEADIFTVRDFGVKELASIKSGVSKRIDSKQNEQAKYLYYNEIITTLSEFDGKILFAGPGFSKNNIQNYISEKHKDLASKIVIESTNHTGRLGLSEILKSGIIDRIYGEARLSKESQIIEKLLEEISKKRLASYGLNSVKNSINYSAVETLLITDEFLRRNRSTVEEMVNSVENSGGKFVVISTEHDSGRQLKALGGISALLRFPVE</sequence>
<dbReference type="EC" id="3.1.-.-" evidence="1"/>
<dbReference type="EMBL" id="CP000742">
    <property type="protein sequence ID" value="ABR54997.1"/>
    <property type="molecule type" value="Genomic_DNA"/>
</dbReference>
<dbReference type="RefSeq" id="WP_012065912.1">
    <property type="nucleotide sequence ID" value="NC_009634.1"/>
</dbReference>
<dbReference type="SMR" id="A6UR75"/>
<dbReference type="STRING" id="406327.Mevan_1097"/>
<dbReference type="GeneID" id="5324593"/>
<dbReference type="KEGG" id="mvn:Mevan_1097"/>
<dbReference type="eggNOG" id="arCOG01741">
    <property type="taxonomic scope" value="Archaea"/>
</dbReference>
<dbReference type="HOGENOM" id="CLU_023334_0_0_2"/>
<dbReference type="OrthoDB" id="31300at2157"/>
<dbReference type="Proteomes" id="UP000001107">
    <property type="component" value="Chromosome"/>
</dbReference>
<dbReference type="GO" id="GO:0005737">
    <property type="term" value="C:cytoplasm"/>
    <property type="evidence" value="ECO:0007669"/>
    <property type="project" value="UniProtKB-SubCell"/>
</dbReference>
<dbReference type="GO" id="GO:0004519">
    <property type="term" value="F:endonuclease activity"/>
    <property type="evidence" value="ECO:0007669"/>
    <property type="project" value="UniProtKB-UniRule"/>
</dbReference>
<dbReference type="GO" id="GO:0046872">
    <property type="term" value="F:metal ion binding"/>
    <property type="evidence" value="ECO:0007669"/>
    <property type="project" value="UniProtKB-UniRule"/>
</dbReference>
<dbReference type="GO" id="GO:0070651">
    <property type="term" value="P:nonfunctional rRNA decay"/>
    <property type="evidence" value="ECO:0007669"/>
    <property type="project" value="TreeGrafter"/>
</dbReference>
<dbReference type="GO" id="GO:0070966">
    <property type="term" value="P:nuclear-transcribed mRNA catabolic process, no-go decay"/>
    <property type="evidence" value="ECO:0007669"/>
    <property type="project" value="InterPro"/>
</dbReference>
<dbReference type="GO" id="GO:0070481">
    <property type="term" value="P:nuclear-transcribed mRNA catabolic process, non-stop decay"/>
    <property type="evidence" value="ECO:0007669"/>
    <property type="project" value="InterPro"/>
</dbReference>
<dbReference type="GO" id="GO:0032790">
    <property type="term" value="P:ribosome disassembly"/>
    <property type="evidence" value="ECO:0007669"/>
    <property type="project" value="TreeGrafter"/>
</dbReference>
<dbReference type="GO" id="GO:0071025">
    <property type="term" value="P:RNA surveillance"/>
    <property type="evidence" value="ECO:0007669"/>
    <property type="project" value="InterPro"/>
</dbReference>
<dbReference type="Gene3D" id="3.30.1330.30">
    <property type="match status" value="1"/>
</dbReference>
<dbReference type="Gene3D" id="3.30.420.60">
    <property type="entry name" value="eRF1 domain 2"/>
    <property type="match status" value="1"/>
</dbReference>
<dbReference type="Gene3D" id="2.30.30.870">
    <property type="entry name" value="Pelota, domain A"/>
    <property type="match status" value="1"/>
</dbReference>
<dbReference type="HAMAP" id="MF_01853">
    <property type="entry name" value="PelO"/>
    <property type="match status" value="1"/>
</dbReference>
<dbReference type="InterPro" id="IPR042226">
    <property type="entry name" value="eFR1_2_sf"/>
</dbReference>
<dbReference type="InterPro" id="IPR005140">
    <property type="entry name" value="eRF1_1_Pelota"/>
</dbReference>
<dbReference type="InterPro" id="IPR005142">
    <property type="entry name" value="eRF1_3"/>
</dbReference>
<dbReference type="InterPro" id="IPR038069">
    <property type="entry name" value="Pelota/DOM34_N"/>
</dbReference>
<dbReference type="InterPro" id="IPR023521">
    <property type="entry name" value="Pelota_arc"/>
</dbReference>
<dbReference type="InterPro" id="IPR029064">
    <property type="entry name" value="Ribosomal_eL30-like_sf"/>
</dbReference>
<dbReference type="InterPro" id="IPR004405">
    <property type="entry name" value="Transl-rel_pelota"/>
</dbReference>
<dbReference type="NCBIfam" id="TIGR00111">
    <property type="entry name" value="pelota"/>
    <property type="match status" value="1"/>
</dbReference>
<dbReference type="PANTHER" id="PTHR10853">
    <property type="entry name" value="PELOTA"/>
    <property type="match status" value="1"/>
</dbReference>
<dbReference type="PANTHER" id="PTHR10853:SF0">
    <property type="entry name" value="PROTEIN PELOTA HOMOLOG"/>
    <property type="match status" value="1"/>
</dbReference>
<dbReference type="Pfam" id="PF03463">
    <property type="entry name" value="eRF1_1"/>
    <property type="match status" value="1"/>
</dbReference>
<dbReference type="Pfam" id="PF03465">
    <property type="entry name" value="eRF1_3"/>
    <property type="match status" value="1"/>
</dbReference>
<dbReference type="SMART" id="SM01194">
    <property type="entry name" value="eRF1_1"/>
    <property type="match status" value="1"/>
</dbReference>
<dbReference type="SUPFAM" id="SSF159065">
    <property type="entry name" value="Dom34/Pelota N-terminal domain-like"/>
    <property type="match status" value="1"/>
</dbReference>
<dbReference type="SUPFAM" id="SSF55315">
    <property type="entry name" value="L30e-like"/>
    <property type="match status" value="1"/>
</dbReference>
<dbReference type="SUPFAM" id="SSF53137">
    <property type="entry name" value="Translational machinery components"/>
    <property type="match status" value="1"/>
</dbReference>
<proteinExistence type="inferred from homology"/>
<gene>
    <name evidence="1" type="primary">pelA</name>
    <name type="ordered locus">Mevan_1097</name>
</gene>
<feature type="chain" id="PRO_0000361799" description="Protein pelota homolog">
    <location>
        <begin position="1"/>
        <end position="348"/>
    </location>
</feature>
<comment type="function">
    <text evidence="1">May function in recognizing stalled ribosomes, interact with stem-loop structures in stalled mRNA molecules, and effect endonucleolytic cleavage of the mRNA. May play a role in the release non-functional ribosomes and degradation of damaged mRNAs. Has endoribonuclease activity.</text>
</comment>
<comment type="cofactor">
    <cofactor evidence="1">
        <name>a divalent metal cation</name>
        <dbReference type="ChEBI" id="CHEBI:60240"/>
    </cofactor>
</comment>
<comment type="subunit">
    <text evidence="1">Monomer.</text>
</comment>
<comment type="subcellular location">
    <subcellularLocation>
        <location evidence="1">Cytoplasm</location>
    </subcellularLocation>
</comment>
<comment type="domain">
    <text evidence="1">The N-terminal domain has the RNA-binding Sm fold. It harbors the endoribonuclease activity.</text>
</comment>
<comment type="similarity">
    <text evidence="1">Belongs to the eukaryotic release factor 1 family. Pelota subfamily.</text>
</comment>
<protein>
    <recommendedName>
        <fullName evidence="1">Protein pelota homolog</fullName>
        <ecNumber evidence="1">3.1.-.-</ecNumber>
    </recommendedName>
</protein>
<accession>A6UR75</accession>
<reference key="1">
    <citation type="submission" date="2007-06" db="EMBL/GenBank/DDBJ databases">
        <title>Complete sequence of Methanococcus vannielii SB.</title>
        <authorList>
            <consortium name="US DOE Joint Genome Institute"/>
            <person name="Copeland A."/>
            <person name="Lucas S."/>
            <person name="Lapidus A."/>
            <person name="Barry K."/>
            <person name="Glavina del Rio T."/>
            <person name="Dalin E."/>
            <person name="Tice H."/>
            <person name="Pitluck S."/>
            <person name="Chain P."/>
            <person name="Malfatti S."/>
            <person name="Shin M."/>
            <person name="Vergez L."/>
            <person name="Schmutz J."/>
            <person name="Larimer F."/>
            <person name="Land M."/>
            <person name="Hauser L."/>
            <person name="Kyrpides N."/>
            <person name="Anderson I."/>
            <person name="Sieprawska-Lupa M."/>
            <person name="Whitman W.B."/>
            <person name="Richardson P."/>
        </authorList>
    </citation>
    <scope>NUCLEOTIDE SEQUENCE [LARGE SCALE GENOMIC DNA]</scope>
    <source>
        <strain>ATCC 35089 / DSM 1224 / JCM 13029 / OCM 148 / SB</strain>
    </source>
</reference>
<organism>
    <name type="scientific">Methanococcus vannielii (strain ATCC 35089 / DSM 1224 / JCM 13029 / OCM 148 / SB)</name>
    <dbReference type="NCBI Taxonomy" id="406327"/>
    <lineage>
        <taxon>Archaea</taxon>
        <taxon>Methanobacteriati</taxon>
        <taxon>Methanobacteriota</taxon>
        <taxon>Methanomada group</taxon>
        <taxon>Methanococci</taxon>
        <taxon>Methanococcales</taxon>
        <taxon>Methanococcaceae</taxon>
        <taxon>Methanococcus</taxon>
    </lineage>
</organism>
<keyword id="KW-0963">Cytoplasm</keyword>
<keyword id="KW-0255">Endonuclease</keyword>
<keyword id="KW-0378">Hydrolase</keyword>
<keyword id="KW-0479">Metal-binding</keyword>
<keyword id="KW-0540">Nuclease</keyword>
<name>PELO_METVS</name>